<evidence type="ECO:0000255" key="1">
    <source>
        <dbReference type="PROSITE-ProRule" id="PRU00448"/>
    </source>
</evidence>
<evidence type="ECO:0000269" key="2">
    <source ref="2"/>
</evidence>
<gene>
    <name type="primary">OLE3</name>
</gene>
<feature type="chain" id="PRO_0000073674" description="Polcalcin Ole e 3">
    <location>
        <begin position="1"/>
        <end position="84"/>
    </location>
</feature>
<feature type="domain" description="EF-hand 1" evidence="1">
    <location>
        <begin position="6"/>
        <end position="40"/>
    </location>
</feature>
<feature type="domain" description="EF-hand 2" evidence="1">
    <location>
        <begin position="41"/>
        <end position="76"/>
    </location>
</feature>
<feature type="binding site" evidence="1">
    <location>
        <position position="19"/>
    </location>
    <ligand>
        <name>Ca(2+)</name>
        <dbReference type="ChEBI" id="CHEBI:29108"/>
        <label>1</label>
    </ligand>
</feature>
<feature type="binding site" evidence="1">
    <location>
        <position position="21"/>
    </location>
    <ligand>
        <name>Ca(2+)</name>
        <dbReference type="ChEBI" id="CHEBI:29108"/>
        <label>1</label>
    </ligand>
</feature>
<feature type="binding site" evidence="1">
    <location>
        <position position="23"/>
    </location>
    <ligand>
        <name>Ca(2+)</name>
        <dbReference type="ChEBI" id="CHEBI:29108"/>
        <label>1</label>
    </ligand>
</feature>
<feature type="binding site" evidence="1">
    <location>
        <position position="25"/>
    </location>
    <ligand>
        <name>Ca(2+)</name>
        <dbReference type="ChEBI" id="CHEBI:29108"/>
        <label>1</label>
    </ligand>
</feature>
<feature type="binding site" evidence="1">
    <location>
        <position position="30"/>
    </location>
    <ligand>
        <name>Ca(2+)</name>
        <dbReference type="ChEBI" id="CHEBI:29108"/>
        <label>1</label>
    </ligand>
</feature>
<feature type="binding site" evidence="1">
    <location>
        <position position="54"/>
    </location>
    <ligand>
        <name>Ca(2+)</name>
        <dbReference type="ChEBI" id="CHEBI:29108"/>
        <label>2</label>
    </ligand>
</feature>
<feature type="binding site" evidence="1">
    <location>
        <position position="56"/>
    </location>
    <ligand>
        <name>Ca(2+)</name>
        <dbReference type="ChEBI" id="CHEBI:29108"/>
        <label>2</label>
    </ligand>
</feature>
<feature type="binding site" evidence="1">
    <location>
        <position position="58"/>
    </location>
    <ligand>
        <name>Ca(2+)</name>
        <dbReference type="ChEBI" id="CHEBI:29108"/>
        <label>2</label>
    </ligand>
</feature>
<feature type="binding site" evidence="1">
    <location>
        <position position="65"/>
    </location>
    <ligand>
        <name>Ca(2+)</name>
        <dbReference type="ChEBI" id="CHEBI:29108"/>
        <label>2</label>
    </ligand>
</feature>
<sequence>MADDPQEVAEHERIFKRFDANGDGKISSSELGETLKTLGSVTPEEIQRMMAEIDTDGDGFISFEEFTVFARANRGLVKDVAKIF</sequence>
<reference key="1">
    <citation type="journal article" date="1998" name="Eur. J. Biochem.">
        <title>Molecular cloning and expression of active Ole e 3, a major allergen from olive-tree pollen and member of a novel family of Ca2+-binding proteins (polcalcins) involved in allergy.</title>
        <authorList>
            <person name="Ledesma A."/>
            <person name="Villalba M."/>
            <person name="Batanero E."/>
            <person name="Rodriguez R."/>
        </authorList>
    </citation>
    <scope>NUCLEOTIDE SEQUENCE [MRNA]</scope>
    <source>
        <tissue>Pollen</tissue>
    </source>
</reference>
<reference key="2">
    <citation type="journal article" date="2003" name="Acta Biol. Crac. Ser. Bot.">
        <title>Temporal and spatial gene expression of Ole e 3 allergen in olive (Olea europaea L.) pollen.</title>
        <authorList>
            <person name="Alche J.D."/>
            <person name="Cismondi I.D."/>
            <person name="Castro A.J."/>
            <person name="Hamman-Khalifa A.M."/>
            <person name="Rodriguez-Garcia M.I."/>
        </authorList>
    </citation>
    <scope>TISSUE SPECIFICITY</scope>
    <scope>SUBCELLULAR LOCATION</scope>
    <source>
        <strain>cv. Picual</strain>
    </source>
</reference>
<reference key="3">
    <citation type="journal article" date="2012" name="Talanta">
        <title>Analysis of olive allergens.</title>
        <authorList>
            <person name="Esteve C."/>
            <person name="Montealegre C."/>
            <person name="Marina M.L."/>
            <person name="Garcia M.C."/>
        </authorList>
    </citation>
    <scope>REVIEW</scope>
    <scope>NOMENCLATURE</scope>
</reference>
<name>ALL3_OLEEU</name>
<protein>
    <recommendedName>
        <fullName>Polcalcin Ole e 3</fullName>
    </recommendedName>
    <alternativeName>
        <fullName>Calcium-binding pollen allergen Ole e 3</fullName>
    </alternativeName>
    <allergenName>Ole e 3</allergenName>
</protein>
<proteinExistence type="evidence at protein level"/>
<keyword id="KW-0020">Allergen</keyword>
<keyword id="KW-0106">Calcium</keyword>
<keyword id="KW-0472">Membrane</keyword>
<keyword id="KW-0479">Metal-binding</keyword>
<keyword id="KW-0677">Repeat</keyword>
<dbReference type="EMBL" id="AF015810">
    <property type="protein sequence ID" value="AAD05375.1"/>
    <property type="molecule type" value="mRNA"/>
</dbReference>
<dbReference type="SMR" id="O81092"/>
<dbReference type="Allergome" id="3384">
    <property type="allergen name" value="Ole e 3.0101"/>
</dbReference>
<dbReference type="Allergome" id="491">
    <property type="allergen name" value="Ole e 3"/>
</dbReference>
<dbReference type="GO" id="GO:0012505">
    <property type="term" value="C:endomembrane system"/>
    <property type="evidence" value="ECO:0007669"/>
    <property type="project" value="UniProtKB-SubCell"/>
</dbReference>
<dbReference type="GO" id="GO:0016020">
    <property type="term" value="C:membrane"/>
    <property type="evidence" value="ECO:0007669"/>
    <property type="project" value="UniProtKB-KW"/>
</dbReference>
<dbReference type="GO" id="GO:0005509">
    <property type="term" value="F:calcium ion binding"/>
    <property type="evidence" value="ECO:0007669"/>
    <property type="project" value="InterPro"/>
</dbReference>
<dbReference type="CDD" id="cd00051">
    <property type="entry name" value="EFh"/>
    <property type="match status" value="1"/>
</dbReference>
<dbReference type="FunFam" id="1.10.238.10:FF:000178">
    <property type="entry name" value="Calmodulin-2 A"/>
    <property type="match status" value="1"/>
</dbReference>
<dbReference type="Gene3D" id="1.10.238.10">
    <property type="entry name" value="EF-hand"/>
    <property type="match status" value="1"/>
</dbReference>
<dbReference type="InterPro" id="IPR011992">
    <property type="entry name" value="EF-hand-dom_pair"/>
</dbReference>
<dbReference type="InterPro" id="IPR018247">
    <property type="entry name" value="EF_Hand_1_Ca_BS"/>
</dbReference>
<dbReference type="InterPro" id="IPR002048">
    <property type="entry name" value="EF_hand_dom"/>
</dbReference>
<dbReference type="InterPro" id="IPR039647">
    <property type="entry name" value="EF_hand_pair_protein_CML-like"/>
</dbReference>
<dbReference type="PANTHER" id="PTHR10891">
    <property type="entry name" value="EF-HAND CALCIUM-BINDING DOMAIN CONTAINING PROTEIN"/>
    <property type="match status" value="1"/>
</dbReference>
<dbReference type="Pfam" id="PF13499">
    <property type="entry name" value="EF-hand_7"/>
    <property type="match status" value="1"/>
</dbReference>
<dbReference type="SMART" id="SM00054">
    <property type="entry name" value="EFh"/>
    <property type="match status" value="2"/>
</dbReference>
<dbReference type="SUPFAM" id="SSF47473">
    <property type="entry name" value="EF-hand"/>
    <property type="match status" value="1"/>
</dbReference>
<dbReference type="PROSITE" id="PS00018">
    <property type="entry name" value="EF_HAND_1"/>
    <property type="match status" value="2"/>
</dbReference>
<dbReference type="PROSITE" id="PS50222">
    <property type="entry name" value="EF_HAND_2"/>
    <property type="match status" value="2"/>
</dbReference>
<comment type="subcellular location">
    <subcellularLocation>
        <location evidence="2">Endomembrane system</location>
    </subcellularLocation>
</comment>
<comment type="tissue specificity">
    <text evidence="2">Expressed exclusively in mature pollen.</text>
</comment>
<comment type="allergen">
    <text>Causes an allergic reaction in human. Binds to IgE.</text>
</comment>
<accession>O81092</accession>
<organism>
    <name type="scientific">Olea europaea</name>
    <name type="common">Common olive</name>
    <dbReference type="NCBI Taxonomy" id="4146"/>
    <lineage>
        <taxon>Eukaryota</taxon>
        <taxon>Viridiplantae</taxon>
        <taxon>Streptophyta</taxon>
        <taxon>Embryophyta</taxon>
        <taxon>Tracheophyta</taxon>
        <taxon>Spermatophyta</taxon>
        <taxon>Magnoliopsida</taxon>
        <taxon>eudicotyledons</taxon>
        <taxon>Gunneridae</taxon>
        <taxon>Pentapetalae</taxon>
        <taxon>asterids</taxon>
        <taxon>lamiids</taxon>
        <taxon>Lamiales</taxon>
        <taxon>Oleaceae</taxon>
        <taxon>Oleeae</taxon>
        <taxon>Olea</taxon>
    </lineage>
</organism>